<protein>
    <recommendedName>
        <fullName>Transcription factor RFX3</fullName>
    </recommendedName>
    <alternativeName>
        <fullName>Regulatory factor X 3</fullName>
    </alternativeName>
</protein>
<comment type="function">
    <text evidence="1">Transcription factor required for ciliogenesis and islet cell differentiation during endocrine pancreas development.</text>
</comment>
<comment type="subcellular location">
    <subcellularLocation>
        <location evidence="2">Nucleus</location>
    </subcellularLocation>
</comment>
<comment type="similarity">
    <text evidence="2">Belongs to the RFX family.</text>
</comment>
<reference key="1">
    <citation type="submission" date="2006-10" db="EMBL/GenBank/DDBJ databases">
        <authorList>
            <consortium name="NIH - Zebrafish Gene Collection (ZGC) project"/>
        </authorList>
    </citation>
    <scope>NUCLEOTIDE SEQUENCE [LARGE SCALE MRNA]</scope>
    <source>
        <tissue>Testis</tissue>
    </source>
</reference>
<feature type="chain" id="PRO_0000392995" description="Transcription factor RFX3">
    <location>
        <begin position="1"/>
        <end position="765"/>
    </location>
</feature>
<feature type="DNA-binding region" description="RFX-type winged-helix" evidence="2">
    <location>
        <begin position="189"/>
        <end position="264"/>
    </location>
</feature>
<sequence>MQTPEAGADSTVSTVPLQTSVPVQPAVSGQQVASQVPVQQQAQTVQQVQHVYQAQVQYVQEENNSVYTNGTIRAYSYSEPQLYNQNSSGNYFDTQGGGGSAAQVSTVVSTHSMANNGNGTGALAMGLTGGQIISSSGAYLIGGNSMDGSAPHGAAQTTRASPATIEMAIETLQKSEGLSSQRSSLLNSHLQWLLDNYETAEGVSLPRSTLYNHYLRHCQEQKLDPVNAASFGKLIRSIFMGLRTRRLGTRGNSKYHYYGIRVKPDSPLNRLQEDMQYMALRQQPVQQKQRFKPVQKMDGVSGDNFSSAGQHTPSAAEQTFIAQSQHHQQFLDGSRALPEFVELDLGEAVDGVGPEDVKALQTLYREHCEAILDVVVNLQFNLIENLWQTFWRYSASSSVEGVTITENSGLSEIEGRLPRARLILLCRHEAVHKWMNTCDHLMYQALVEILIPDVLRPIPSALTQAIRNFAKSLEGWLTNAMSSIPPRMINTKVSAVSAFAQTLRRYTSLNHLAQAARAVLQNTSQINQMLSDLNRVDFANVQEQASWVCQCEEGVVQRLEQDFKATLQQQSSLEQWAAWLDNVVTQILKPYEDKPTLPKAARQFLLKWSFYSSMVIRDLTLRSAASFGSFHLIRLLYDEYMFYLVEHRVAQATGETAIGVMGEFQDLNTMSPANIDKDEVSEMDSDLDEEMEEADEPLAKREKVEADVIQVLQVGAMEDGSSAVVGIVQPSMINSLPPTTNNHSEHILSTGTSTIRHVGNTYASV</sequence>
<accession>A0JMF8</accession>
<gene>
    <name type="primary">rfx3</name>
    <name type="ORF">zgc:153245</name>
</gene>
<evidence type="ECO:0000250" key="1"/>
<evidence type="ECO:0000255" key="2">
    <source>
        <dbReference type="PROSITE-ProRule" id="PRU00858"/>
    </source>
</evidence>
<proteinExistence type="evidence at transcript level"/>
<keyword id="KW-0217">Developmental protein</keyword>
<keyword id="KW-0221">Differentiation</keyword>
<keyword id="KW-0238">DNA-binding</keyword>
<keyword id="KW-0539">Nucleus</keyword>
<keyword id="KW-1185">Reference proteome</keyword>
<keyword id="KW-0678">Repressor</keyword>
<keyword id="KW-0804">Transcription</keyword>
<keyword id="KW-0805">Transcription regulation</keyword>
<organism>
    <name type="scientific">Danio rerio</name>
    <name type="common">Zebrafish</name>
    <name type="synonym">Brachydanio rerio</name>
    <dbReference type="NCBI Taxonomy" id="7955"/>
    <lineage>
        <taxon>Eukaryota</taxon>
        <taxon>Metazoa</taxon>
        <taxon>Chordata</taxon>
        <taxon>Craniata</taxon>
        <taxon>Vertebrata</taxon>
        <taxon>Euteleostomi</taxon>
        <taxon>Actinopterygii</taxon>
        <taxon>Neopterygii</taxon>
        <taxon>Teleostei</taxon>
        <taxon>Ostariophysi</taxon>
        <taxon>Cypriniformes</taxon>
        <taxon>Danionidae</taxon>
        <taxon>Danioninae</taxon>
        <taxon>Danio</taxon>
    </lineage>
</organism>
<name>RFX3_DANRE</name>
<dbReference type="EMBL" id="BC125862">
    <property type="protein sequence ID" value="AAI25863.1"/>
    <property type="molecule type" value="mRNA"/>
</dbReference>
<dbReference type="RefSeq" id="NP_001073517.1">
    <property type="nucleotide sequence ID" value="NM_001080048.1"/>
</dbReference>
<dbReference type="SMR" id="A0JMF8"/>
<dbReference type="FunCoup" id="A0JMF8">
    <property type="interactions" value="1466"/>
</dbReference>
<dbReference type="STRING" id="7955.ENSDARP00000041235"/>
<dbReference type="PaxDb" id="7955-ENSDARP00000041235"/>
<dbReference type="PeptideAtlas" id="A0JMF8"/>
<dbReference type="GeneID" id="570989"/>
<dbReference type="KEGG" id="dre:570989"/>
<dbReference type="AGR" id="ZFIN:ZDB-GENE-061103-253"/>
<dbReference type="CTD" id="5991"/>
<dbReference type="ZFIN" id="ZDB-GENE-061103-253">
    <property type="gene designation" value="rfx3"/>
</dbReference>
<dbReference type="eggNOG" id="KOG3712">
    <property type="taxonomic scope" value="Eukaryota"/>
</dbReference>
<dbReference type="InParanoid" id="A0JMF8"/>
<dbReference type="OrthoDB" id="10056949at2759"/>
<dbReference type="PhylomeDB" id="A0JMF8"/>
<dbReference type="PRO" id="PR:A0JMF8"/>
<dbReference type="Proteomes" id="UP000000437">
    <property type="component" value="Chromosome 10"/>
</dbReference>
<dbReference type="GO" id="GO:0005576">
    <property type="term" value="C:extracellular region"/>
    <property type="evidence" value="ECO:0007669"/>
    <property type="project" value="GOC"/>
</dbReference>
<dbReference type="GO" id="GO:0005634">
    <property type="term" value="C:nucleus"/>
    <property type="evidence" value="ECO:0007669"/>
    <property type="project" value="UniProtKB-SubCell"/>
</dbReference>
<dbReference type="GO" id="GO:0000981">
    <property type="term" value="F:DNA-binding transcription factor activity, RNA polymerase II-specific"/>
    <property type="evidence" value="ECO:0000318"/>
    <property type="project" value="GO_Central"/>
</dbReference>
<dbReference type="GO" id="GO:0000978">
    <property type="term" value="F:RNA polymerase II cis-regulatory region sequence-specific DNA binding"/>
    <property type="evidence" value="ECO:0000318"/>
    <property type="project" value="GO_Central"/>
</dbReference>
<dbReference type="GO" id="GO:0000976">
    <property type="term" value="F:transcription cis-regulatory region binding"/>
    <property type="evidence" value="ECO:0000250"/>
    <property type="project" value="UniProtKB"/>
</dbReference>
<dbReference type="GO" id="GO:0030154">
    <property type="term" value="P:cell differentiation"/>
    <property type="evidence" value="ECO:0007669"/>
    <property type="project" value="UniProtKB-KW"/>
</dbReference>
<dbReference type="GO" id="GO:0060285">
    <property type="term" value="P:cilium-dependent cell motility"/>
    <property type="evidence" value="ECO:0000250"/>
    <property type="project" value="UniProtKB"/>
</dbReference>
<dbReference type="GO" id="GO:0006351">
    <property type="term" value="P:DNA-templated transcription"/>
    <property type="evidence" value="ECO:0000250"/>
    <property type="project" value="UniProtKB"/>
</dbReference>
<dbReference type="GO" id="GO:0031018">
    <property type="term" value="P:endocrine pancreas development"/>
    <property type="evidence" value="ECO:0000250"/>
    <property type="project" value="UniProtKB"/>
</dbReference>
<dbReference type="GO" id="GO:0060287">
    <property type="term" value="P:epithelial cilium movement involved in determination of left/right asymmetry"/>
    <property type="evidence" value="ECO:0000250"/>
    <property type="project" value="UniProtKB"/>
</dbReference>
<dbReference type="GO" id="GO:0006355">
    <property type="term" value="P:regulation of DNA-templated transcription"/>
    <property type="evidence" value="ECO:0000250"/>
    <property type="project" value="UniProtKB"/>
</dbReference>
<dbReference type="GO" id="GO:0050796">
    <property type="term" value="P:regulation of insulin secretion"/>
    <property type="evidence" value="ECO:0000250"/>
    <property type="project" value="UniProtKB"/>
</dbReference>
<dbReference type="GO" id="GO:0006357">
    <property type="term" value="P:regulation of transcription by RNA polymerase II"/>
    <property type="evidence" value="ECO:0000318"/>
    <property type="project" value="GO_Central"/>
</dbReference>
<dbReference type="FunFam" id="1.10.10.10:FF:000017">
    <property type="entry name" value="transcription factor RFX3 isoform X1"/>
    <property type="match status" value="1"/>
</dbReference>
<dbReference type="Gene3D" id="1.10.10.10">
    <property type="entry name" value="Winged helix-like DNA-binding domain superfamily/Winged helix DNA-binding domain"/>
    <property type="match status" value="1"/>
</dbReference>
<dbReference type="InterPro" id="IPR003150">
    <property type="entry name" value="DNA-bd_RFX"/>
</dbReference>
<dbReference type="InterPro" id="IPR039779">
    <property type="entry name" value="RFX-like"/>
</dbReference>
<dbReference type="InterPro" id="IPR007668">
    <property type="entry name" value="RFX1_trans_act"/>
</dbReference>
<dbReference type="InterPro" id="IPR036388">
    <property type="entry name" value="WH-like_DNA-bd_sf"/>
</dbReference>
<dbReference type="InterPro" id="IPR036390">
    <property type="entry name" value="WH_DNA-bd_sf"/>
</dbReference>
<dbReference type="PANTHER" id="PTHR12619">
    <property type="entry name" value="RFX TRANSCRIPTION FACTOR FAMILY"/>
    <property type="match status" value="1"/>
</dbReference>
<dbReference type="PANTHER" id="PTHR12619:SF20">
    <property type="entry name" value="TRANSCRIPTION FACTOR RFX3"/>
    <property type="match status" value="1"/>
</dbReference>
<dbReference type="Pfam" id="PF25340">
    <property type="entry name" value="BCD_RFX"/>
    <property type="match status" value="1"/>
</dbReference>
<dbReference type="Pfam" id="PF04589">
    <property type="entry name" value="RFX1_trans_act"/>
    <property type="match status" value="1"/>
</dbReference>
<dbReference type="Pfam" id="PF02257">
    <property type="entry name" value="RFX_DNA_binding"/>
    <property type="match status" value="1"/>
</dbReference>
<dbReference type="SUPFAM" id="SSF46785">
    <property type="entry name" value="Winged helix' DNA-binding domain"/>
    <property type="match status" value="1"/>
</dbReference>
<dbReference type="PROSITE" id="PS51526">
    <property type="entry name" value="RFX_DBD"/>
    <property type="match status" value="1"/>
</dbReference>